<protein>
    <recommendedName>
        <fullName evidence="1">Protein E7</fullName>
    </recommendedName>
</protein>
<feature type="chain" id="PRO_0000133458" description="Protein E7">
    <location>
        <begin position="1"/>
        <end position="98"/>
    </location>
</feature>
<feature type="zinc finger region" evidence="1">
    <location>
        <begin position="53"/>
        <end position="90"/>
    </location>
</feature>
<feature type="region of interest" description="E7 terminal domain" evidence="1">
    <location>
        <begin position="1"/>
        <end position="42"/>
    </location>
</feature>
<feature type="short sequence motif" description="Nuclear export signal" evidence="1">
    <location>
        <begin position="71"/>
        <end position="79"/>
    </location>
</feature>
<reference key="1">
    <citation type="journal article" date="1993" name="Virology">
        <title>Two novel types of human papillomavirus, HPV 63 and HPV 65: comparisons of their clinical and histological features and DNA sequences to other HPV types.</title>
        <authorList>
            <person name="Egawa K."/>
            <person name="Delius H."/>
            <person name="Matsukura T."/>
            <person name="Kawashima M."/>
            <person name="de Villiers E.M."/>
        </authorList>
    </citation>
    <scope>NUCLEOTIDE SEQUENCE [GENOMIC DNA]</scope>
</reference>
<reference key="2">
    <citation type="journal article" date="2002" name="Rev. Med. Virol.">
        <title>Interactions of SV40 large T antigen and other viral proteins with retinoblastoma tumour suppressor.</title>
        <authorList>
            <person name="Lee C."/>
            <person name="Cho Y."/>
        </authorList>
    </citation>
    <scope>REVIEW</scope>
</reference>
<name>VE7_HPV65</name>
<evidence type="ECO:0000255" key="1">
    <source>
        <dbReference type="HAMAP-Rule" id="MF_04004"/>
    </source>
</evidence>
<accession>Q07859</accession>
<organism>
    <name type="scientific">Human papillomavirus 65</name>
    <dbReference type="NCBI Taxonomy" id="28312"/>
    <lineage>
        <taxon>Viruses</taxon>
        <taxon>Monodnaviria</taxon>
        <taxon>Shotokuvirae</taxon>
        <taxon>Cossaviricota</taxon>
        <taxon>Papovaviricetes</taxon>
        <taxon>Zurhausenvirales</taxon>
        <taxon>Papillomaviridae</taxon>
        <taxon>Firstpapillomavirinae</taxon>
        <taxon>Gammapapillomavirus</taxon>
        <taxon>Gammapapillomavirus 1</taxon>
    </lineage>
</organism>
<keyword id="KW-0010">Activator</keyword>
<keyword id="KW-0238">DNA-binding</keyword>
<keyword id="KW-0244">Early protein</keyword>
<keyword id="KW-1078">G1/S host cell cycle checkpoint dysregulation by virus</keyword>
<keyword id="KW-1035">Host cytoplasm</keyword>
<keyword id="KW-1048">Host nucleus</keyword>
<keyword id="KW-0945">Host-virus interaction</keyword>
<keyword id="KW-1090">Inhibition of host innate immune response by virus</keyword>
<keyword id="KW-1114">Inhibition of host interferon signaling pathway by virus</keyword>
<keyword id="KW-0922">Interferon antiviral system evasion</keyword>
<keyword id="KW-0479">Metal-binding</keyword>
<keyword id="KW-1121">Modulation of host cell cycle by virus</keyword>
<keyword id="KW-0553">Oncogene</keyword>
<keyword id="KW-0804">Transcription</keyword>
<keyword id="KW-0805">Transcription regulation</keyword>
<keyword id="KW-0899">Viral immunoevasion</keyword>
<keyword id="KW-0862">Zinc</keyword>
<keyword id="KW-0863">Zinc-finger</keyword>
<sequence length="98" mass="11062">MRGAAPRVADLNLELNDLVLPINLLSEEVLQPSDDESEAPEEELFPFRIDTCCYRCEVNVRITLFAVEFGLRALEQLIVDGKLTFCCTTCARTLRNGR</sequence>
<gene>
    <name evidence="1" type="primary">E7</name>
</gene>
<organismHost>
    <name type="scientific">Homo sapiens</name>
    <name type="common">Human</name>
    <dbReference type="NCBI Taxonomy" id="9606"/>
</organismHost>
<proteinExistence type="inferred from homology"/>
<dbReference type="EMBL" id="X70829">
    <property type="protein sequence ID" value="CAA50172.1"/>
    <property type="molecule type" value="Genomic_DNA"/>
</dbReference>
<dbReference type="SMR" id="Q07859"/>
<dbReference type="Proteomes" id="UP000007672">
    <property type="component" value="Genome"/>
</dbReference>
<dbReference type="GO" id="GO:0030430">
    <property type="term" value="C:host cell cytoplasm"/>
    <property type="evidence" value="ECO:0007669"/>
    <property type="project" value="UniProtKB-SubCell"/>
</dbReference>
<dbReference type="GO" id="GO:0042025">
    <property type="term" value="C:host cell nucleus"/>
    <property type="evidence" value="ECO:0007669"/>
    <property type="project" value="UniProtKB-SubCell"/>
</dbReference>
<dbReference type="GO" id="GO:0003677">
    <property type="term" value="F:DNA binding"/>
    <property type="evidence" value="ECO:0007669"/>
    <property type="project" value="UniProtKB-UniRule"/>
</dbReference>
<dbReference type="GO" id="GO:0003700">
    <property type="term" value="F:DNA-binding transcription factor activity"/>
    <property type="evidence" value="ECO:0007669"/>
    <property type="project" value="UniProtKB-UniRule"/>
</dbReference>
<dbReference type="GO" id="GO:0019904">
    <property type="term" value="F:protein domain specific binding"/>
    <property type="evidence" value="ECO:0007669"/>
    <property type="project" value="UniProtKB-UniRule"/>
</dbReference>
<dbReference type="GO" id="GO:0008270">
    <property type="term" value="F:zinc ion binding"/>
    <property type="evidence" value="ECO:0007669"/>
    <property type="project" value="UniProtKB-KW"/>
</dbReference>
<dbReference type="GO" id="GO:0006351">
    <property type="term" value="P:DNA-templated transcription"/>
    <property type="evidence" value="ECO:0007669"/>
    <property type="project" value="UniProtKB-UniRule"/>
</dbReference>
<dbReference type="GO" id="GO:0039645">
    <property type="term" value="P:symbiont-mediated perturbation of host cell cycle G1/S transition checkpoint"/>
    <property type="evidence" value="ECO:0007669"/>
    <property type="project" value="UniProtKB-UniRule"/>
</dbReference>
<dbReference type="GO" id="GO:0052170">
    <property type="term" value="P:symbiont-mediated suppression of host innate immune response"/>
    <property type="evidence" value="ECO:0007669"/>
    <property type="project" value="UniProtKB-KW"/>
</dbReference>
<dbReference type="GO" id="GO:0039502">
    <property type="term" value="P:symbiont-mediated suppression of host type I interferon-mediated signaling pathway"/>
    <property type="evidence" value="ECO:0007669"/>
    <property type="project" value="UniProtKB-UniRule"/>
</dbReference>
<dbReference type="Gene3D" id="3.30.160.330">
    <property type="match status" value="1"/>
</dbReference>
<dbReference type="HAMAP" id="MF_04004">
    <property type="entry name" value="PPV_E7"/>
    <property type="match status" value="1"/>
</dbReference>
<dbReference type="InterPro" id="IPR000148">
    <property type="entry name" value="Papilloma_E7"/>
</dbReference>
<dbReference type="Pfam" id="PF00527">
    <property type="entry name" value="E7"/>
    <property type="match status" value="1"/>
</dbReference>
<dbReference type="PIRSF" id="PIRSF003407">
    <property type="entry name" value="Papvi_E7"/>
    <property type="match status" value="1"/>
</dbReference>
<dbReference type="SUPFAM" id="SSF161234">
    <property type="entry name" value="E7 C-terminal domain-like"/>
    <property type="match status" value="1"/>
</dbReference>
<comment type="function">
    <text evidence="1">Plays a role in viral genome replication by driving entry of quiescent cells into the cell cycle. Stimulation of progression from G1 to S phase allows the virus to efficiently use the cellular DNA replicating machinery to achieve viral genome replication. E7 protein has both transforming and trans-activating activities. Induces the disassembly of the E2F1 transcription factor from RB1, with subsequent transcriptional activation of E2F1-regulated S-phase genes. Interferes with host histone deacetylation mediated by HDAC1 and HDAC2, leading to transcription activation. Also plays a role in the inhibition of both antiviral and antiproliferative functions of host interferon alpha. Interaction with host TMEM173/STING impairs the ability of TMEM173/STING to sense cytosolic DNA and promote the production of type I interferon (IFN-alpha and IFN-beta).</text>
</comment>
<comment type="subunit">
    <text evidence="1">Homodimer. Homooligomer. Interacts with host RB1; this interaction induces dissociation of RB1-E2F1 complex thereby disrupting RB1 activity. Interacts with host EP300; this interaction represses EP300 transcriptional activity. Interacts with protein E2; this interaction inhibits E7 oncogenic activity. Interacts with host TMEM173/STING; this interaction impairs the ability of TMEM173/STING to sense cytosolic DNA and promote the production of type I interferon (IFN-alpha and IFN-beta).</text>
</comment>
<comment type="subcellular location">
    <subcellularLocation>
        <location evidence="1">Host cytoplasm</location>
    </subcellularLocation>
    <subcellularLocation>
        <location evidence="1">Host nucleus</location>
    </subcellularLocation>
    <text evidence="1">Predominantly found in the host nucleus.</text>
</comment>
<comment type="domain">
    <text evidence="1">The E7 terminal domain is an intrinsically disordered domain, whose flexibility and conformational transitions confer target adaptability to the oncoprotein. It allows adaptation to a variety of protein targets and exposes the PEST degradation sequence that regulates its turnover in the cell.</text>
</comment>
<comment type="PTM">
    <text evidence="1">Highly phosphorylated.</text>
</comment>
<comment type="similarity">
    <text evidence="1">Belongs to the papillomaviridae E7 protein family.</text>
</comment>